<keyword id="KW-0002">3D-structure</keyword>
<keyword id="KW-0165">Cleavage on pair of basic residues</keyword>
<keyword id="KW-0202">Cytokine</keyword>
<keyword id="KW-1015">Disulfide bond</keyword>
<keyword id="KW-0325">Glycoprotein</keyword>
<keyword id="KW-0339">Growth factor</keyword>
<keyword id="KW-0358">Heparin-binding</keyword>
<keyword id="KW-1185">Reference proteome</keyword>
<keyword id="KW-0964">Secreted</keyword>
<keyword id="KW-0732">Signal</keyword>
<comment type="function">
    <text evidence="3 6 7">Acts specifically as a negative regulator of skeletal muscle growth.</text>
</comment>
<comment type="subunit">
    <text evidence="2 4 5">Homodimer; disulfide-linked (PubMed:19644449). Interacts with WFIKKN2, leading to inhibit its activity (PubMed:12595574). Interacts with FSTL3 (PubMed:22052913).</text>
</comment>
<comment type="subcellular location">
    <subcellularLocation>
        <location evidence="3">Secreted</location>
    </subcellularLocation>
</comment>
<comment type="tissue specificity">
    <text evidence="7">Expressed specifically in developing and adult skeletal muscle. Weak expression in adipose tissue.</text>
</comment>
<comment type="developmental stage">
    <text evidence="7">First detected 9.5 dpc in one-third of developing somites. At 10.5 dpc, expressed in the myotome compartment of somites. At later stages of development, detected in a wide range of developing muscles. Expression continues in adulthood.</text>
</comment>
<comment type="PTM">
    <text evidence="3">Synthesized as large precursor molecule that undergoes proteolytic cleavage to generate an N-terminal propeptide and a disulfide linked C-terminal dimer, which is the biologically active molecule. The circulating form consists of a latent complex of the C-terminal dimer and other proteins, including its propeptide, which maintain the C-terminal dimer in a latent, inactive state. Ligand activation requires additional cleavage of the prodomain by a tolloid-like metalloproteinase (PubMed:14671324).</text>
</comment>
<comment type="disruption phenotype">
    <text evidence="6">Mutant animals exhibit muscle hypertrophy.</text>
</comment>
<comment type="similarity">
    <text evidence="8">Belongs to the TGF-beta family.</text>
</comment>
<reference key="1">
    <citation type="journal article" date="1997" name="Nature">
        <title>Regulation of skeletal muscle mass in mice by a new TGF-beta superfamily member.</title>
        <authorList>
            <person name="McPherron A.C."/>
            <person name="Lawler A.M."/>
            <person name="Lee S.-J."/>
        </authorList>
    </citation>
    <scope>NUCLEOTIDE SEQUENCE [MRNA]</scope>
    <scope>FUNCTION</scope>
    <scope>DEVELOPMENTAL STAGE</scope>
    <scope>TISSUE SPECIFICITY</scope>
    <source>
        <strain>CD-1</strain>
        <tissue>Skeletal muscle</tissue>
    </source>
</reference>
<reference key="2">
    <citation type="journal article" date="2003" name="Mol. Endocrinol.">
        <title>Regulation of myostatin in vivo by growth and differentiation factor-associated serum protein-1: a novel protein with protease inhibitor and follistatin domains.</title>
        <authorList>
            <person name="Hill J.J."/>
            <person name="Qiu Y."/>
            <person name="Hewick R.M."/>
            <person name="Wolfman N.M."/>
        </authorList>
    </citation>
    <scope>INTERACTION WITH WFIKKN2</scope>
</reference>
<reference key="3">
    <citation type="journal article" date="2003" name="Proc. Natl. Acad. Sci. U.S.A.">
        <title>Activation of latent myostatin by the BMP-1/tolloid family of metalloproteinases.</title>
        <authorList>
            <person name="Wolfman N.M."/>
            <person name="McPherron A.C."/>
            <person name="Pappano W.N."/>
            <person name="Davies M.V."/>
            <person name="Song K."/>
            <person name="Tomkinson K.N."/>
            <person name="Wright J.F."/>
            <person name="Zhao L."/>
            <person name="Sebald S.M."/>
            <person name="Greenspan D.S."/>
            <person name="Lee S.J."/>
        </authorList>
    </citation>
    <scope>PROTEOLYTIC CLEAVAGE AT ARG-99</scope>
    <scope>MUTAGENESIS OF ARG-99 AND ASP-100</scope>
    <scope>FUNCTION</scope>
    <scope>SUBCELLULAR LOCATION</scope>
</reference>
<reference key="4">
    <citation type="journal article" date="2013" name="Nat. Genet.">
        <title>BMP signaling controls muscle mass.</title>
        <authorList>
            <person name="Sartori R."/>
            <person name="Schirwis E."/>
            <person name="Blaauw B."/>
            <person name="Bortolanza S."/>
            <person name="Zhao J."/>
            <person name="Enzo E."/>
            <person name="Stantzou A."/>
            <person name="Mouisel E."/>
            <person name="Toniolo L."/>
            <person name="Ferry A."/>
            <person name="Stricker S."/>
            <person name="Goldberg A.L."/>
            <person name="Dupont S."/>
            <person name="Piccolo S."/>
            <person name="Amthor H."/>
            <person name="Sandri M."/>
        </authorList>
    </citation>
    <scope>DISRUPTION PHENOTYPE</scope>
    <scope>FUNCTION</scope>
</reference>
<reference key="5">
    <citation type="journal article" date="2009" name="EMBO J.">
        <title>The structure of myostatin:follistatin 288: insights into receptor utilization and heparin binding.</title>
        <authorList>
            <person name="Cash J.N."/>
            <person name="Rejon C.A."/>
            <person name="McPherron A.C."/>
            <person name="Bernard D.J."/>
            <person name="Thompson T.B."/>
        </authorList>
    </citation>
    <scope>X-RAY CRYSTALLOGRAPHY (2.15 ANGSTROMS) OF 268-376 IN COMPLEX WITH HUMAN FST</scope>
    <scope>SUBUNIT</scope>
    <scope>HEPARIN-BINDING</scope>
    <scope>DISULFIDE BONDS</scope>
</reference>
<reference key="6">
    <citation type="journal article" date="2012" name="J. Biol. Chem.">
        <title>Structure of myostatin.follistatin-like 3: N-terminal domains of follistatin-type molecules exhibit alternate modes of binding.</title>
        <authorList>
            <person name="Cash J.N."/>
            <person name="Angerman E.B."/>
            <person name="Kattamuri C."/>
            <person name="Nolan K."/>
            <person name="Zhao H."/>
            <person name="Sidis Y."/>
            <person name="Keutmann H.T."/>
            <person name="Thompson T.B."/>
        </authorList>
    </citation>
    <scope>X-RAY CRYSTALLOGRAPHY (2.4 ANGSTROMS) OF 268-376 IN COMPLEX WITH HUMAN FSTL3</scope>
    <scope>DISULFIDE BONDS</scope>
</reference>
<gene>
    <name type="primary">Mstn</name>
    <name type="synonym">Gdf8</name>
</gene>
<proteinExistence type="evidence at protein level"/>
<organism>
    <name type="scientific">Mus musculus</name>
    <name type="common">Mouse</name>
    <dbReference type="NCBI Taxonomy" id="10090"/>
    <lineage>
        <taxon>Eukaryota</taxon>
        <taxon>Metazoa</taxon>
        <taxon>Chordata</taxon>
        <taxon>Craniata</taxon>
        <taxon>Vertebrata</taxon>
        <taxon>Euteleostomi</taxon>
        <taxon>Mammalia</taxon>
        <taxon>Eutheria</taxon>
        <taxon>Euarchontoglires</taxon>
        <taxon>Glires</taxon>
        <taxon>Rodentia</taxon>
        <taxon>Myomorpha</taxon>
        <taxon>Muroidea</taxon>
        <taxon>Muridae</taxon>
        <taxon>Murinae</taxon>
        <taxon>Mus</taxon>
        <taxon>Mus</taxon>
    </lineage>
</organism>
<feature type="signal peptide" evidence="1">
    <location>
        <begin position="1"/>
        <end position="24"/>
    </location>
</feature>
<feature type="propeptide" id="PRO_0000033956" evidence="1">
    <location>
        <begin position="25"/>
        <end position="267"/>
    </location>
</feature>
<feature type="chain" id="PRO_0000033957" description="Growth/differentiation factor 8">
    <location>
        <begin position="268"/>
        <end position="376"/>
    </location>
</feature>
<feature type="site" description="Cleavage" evidence="3">
    <location>
        <begin position="99"/>
        <end position="100"/>
    </location>
</feature>
<feature type="glycosylation site" description="N-linked (GlcNAc...) asparagine" evidence="1">
    <location>
        <position position="72"/>
    </location>
</feature>
<feature type="disulfide bond" evidence="4 5 9 10">
    <location>
        <begin position="273"/>
        <end position="283"/>
    </location>
</feature>
<feature type="disulfide bond" evidence="4 5 9 10">
    <location>
        <begin position="282"/>
        <end position="341"/>
    </location>
</feature>
<feature type="disulfide bond" evidence="4 5 9 10">
    <location>
        <begin position="310"/>
        <end position="373"/>
    </location>
</feature>
<feature type="disulfide bond" evidence="4 5 9 10">
    <location>
        <begin position="314"/>
        <end position="375"/>
    </location>
</feature>
<feature type="disulfide bond" description="Interchain" evidence="4 9">
    <location>
        <position position="340"/>
    </location>
</feature>
<feature type="mutagenesis site" description="No effect on proteolytic cleavage." evidence="3">
    <original>R</original>
    <variation>Q</variation>
    <location>
        <position position="99"/>
    </location>
</feature>
<feature type="mutagenesis site" description="Blocks proteolytic cleavage; increases muscle mass when injected into adult mice." evidence="3">
    <original>D</original>
    <variation>A</variation>
    <location>
        <position position="100"/>
    </location>
</feature>
<feature type="strand" evidence="11">
    <location>
        <begin position="281"/>
        <end position="285"/>
    </location>
</feature>
<feature type="strand" evidence="11">
    <location>
        <begin position="288"/>
        <end position="290"/>
    </location>
</feature>
<feature type="helix" evidence="11">
    <location>
        <begin position="291"/>
        <end position="294"/>
    </location>
</feature>
<feature type="strand" evidence="11">
    <location>
        <begin position="299"/>
        <end position="301"/>
    </location>
</feature>
<feature type="strand" evidence="11">
    <location>
        <begin position="303"/>
        <end position="306"/>
    </location>
</feature>
<feature type="strand" evidence="11">
    <location>
        <begin position="309"/>
        <end position="311"/>
    </location>
</feature>
<feature type="turn" evidence="11">
    <location>
        <begin position="316"/>
        <end position="319"/>
    </location>
</feature>
<feature type="helix" evidence="11">
    <location>
        <begin position="324"/>
        <end position="331"/>
    </location>
</feature>
<feature type="strand" evidence="11">
    <location>
        <begin position="340"/>
        <end position="354"/>
    </location>
</feature>
<feature type="strand" evidence="12">
    <location>
        <begin position="356"/>
        <end position="358"/>
    </location>
</feature>
<feature type="strand" evidence="11">
    <location>
        <begin position="360"/>
        <end position="376"/>
    </location>
</feature>
<dbReference type="EMBL" id="U84005">
    <property type="protein sequence ID" value="AAC53167.1"/>
    <property type="molecule type" value="mRNA"/>
</dbReference>
<dbReference type="CCDS" id="CCDS14950.1"/>
<dbReference type="RefSeq" id="NP_034964.1">
    <property type="nucleotide sequence ID" value="NM_010834.3"/>
</dbReference>
<dbReference type="PDB" id="3HH2">
    <property type="method" value="X-ray"/>
    <property type="resolution" value="2.15 A"/>
    <property type="chains" value="A/B=268-376"/>
</dbReference>
<dbReference type="PDB" id="3SEK">
    <property type="method" value="X-ray"/>
    <property type="resolution" value="2.40 A"/>
    <property type="chains" value="B=268-376"/>
</dbReference>
<dbReference type="PDB" id="5JI1">
    <property type="method" value="X-ray"/>
    <property type="resolution" value="2.25 A"/>
    <property type="chains" value="A/B=268-376"/>
</dbReference>
<dbReference type="PDBsum" id="3HH2"/>
<dbReference type="PDBsum" id="3SEK"/>
<dbReference type="PDBsum" id="5JI1"/>
<dbReference type="SMR" id="O08689"/>
<dbReference type="BioGRID" id="201535">
    <property type="interactions" value="1"/>
</dbReference>
<dbReference type="CORUM" id="O08689"/>
<dbReference type="FunCoup" id="O08689">
    <property type="interactions" value="524"/>
</dbReference>
<dbReference type="IntAct" id="O08689">
    <property type="interactions" value="4"/>
</dbReference>
<dbReference type="MINT" id="O08689"/>
<dbReference type="STRING" id="10090.ENSMUSP00000027269"/>
<dbReference type="BindingDB" id="O08689"/>
<dbReference type="ChEMBL" id="CHEMBL3588736"/>
<dbReference type="GlyCosmos" id="O08689">
    <property type="glycosylation" value="1 site, No reported glycans"/>
</dbReference>
<dbReference type="GlyGen" id="O08689">
    <property type="glycosylation" value="1 site"/>
</dbReference>
<dbReference type="iPTMnet" id="O08689"/>
<dbReference type="PhosphoSitePlus" id="O08689"/>
<dbReference type="CPTAC" id="non-CPTAC-3298"/>
<dbReference type="jPOST" id="O08689"/>
<dbReference type="PaxDb" id="10090-ENSMUSP00000027269"/>
<dbReference type="PeptideAtlas" id="O08689"/>
<dbReference type="ProteomicsDB" id="273042"/>
<dbReference type="ABCD" id="O08689">
    <property type="antibodies" value="5 sequenced antibodies"/>
</dbReference>
<dbReference type="Antibodypedia" id="4098">
    <property type="antibodies" value="952 antibodies from 40 providers"/>
</dbReference>
<dbReference type="DNASU" id="17700"/>
<dbReference type="Ensembl" id="ENSMUST00000027269.7">
    <property type="protein sequence ID" value="ENSMUSP00000027269.6"/>
    <property type="gene ID" value="ENSMUSG00000026100.7"/>
</dbReference>
<dbReference type="GeneID" id="17700"/>
<dbReference type="KEGG" id="mmu:17700"/>
<dbReference type="UCSC" id="uc007ayt.1">
    <property type="organism name" value="mouse"/>
</dbReference>
<dbReference type="AGR" id="MGI:95691"/>
<dbReference type="CTD" id="2660"/>
<dbReference type="MGI" id="MGI:95691">
    <property type="gene designation" value="Mstn"/>
</dbReference>
<dbReference type="VEuPathDB" id="HostDB:ENSMUSG00000026100"/>
<dbReference type="eggNOG" id="KOG3900">
    <property type="taxonomic scope" value="Eukaryota"/>
</dbReference>
<dbReference type="GeneTree" id="ENSGT00940000160657"/>
<dbReference type="HOGENOM" id="CLU_020515_6_1_1"/>
<dbReference type="InParanoid" id="O08689"/>
<dbReference type="OMA" id="CNACMWR"/>
<dbReference type="OrthoDB" id="5948587at2759"/>
<dbReference type="PhylomeDB" id="O08689"/>
<dbReference type="TreeFam" id="TF318514"/>
<dbReference type="BioGRID-ORCS" id="17700">
    <property type="hits" value="2 hits in 76 CRISPR screens"/>
</dbReference>
<dbReference type="EvolutionaryTrace" id="O08689"/>
<dbReference type="PRO" id="PR:O08689"/>
<dbReference type="Proteomes" id="UP000000589">
    <property type="component" value="Chromosome 1"/>
</dbReference>
<dbReference type="RNAct" id="O08689">
    <property type="molecule type" value="protein"/>
</dbReference>
<dbReference type="Bgee" id="ENSMUSG00000026100">
    <property type="expression patterns" value="Expressed in gastrocnemius and 44 other cell types or tissues"/>
</dbReference>
<dbReference type="ExpressionAtlas" id="O08689">
    <property type="expression patterns" value="baseline and differential"/>
</dbReference>
<dbReference type="GO" id="GO:0005576">
    <property type="term" value="C:extracellular region"/>
    <property type="evidence" value="ECO:0000304"/>
    <property type="project" value="Reactome"/>
</dbReference>
<dbReference type="GO" id="GO:0005615">
    <property type="term" value="C:extracellular space"/>
    <property type="evidence" value="ECO:0000314"/>
    <property type="project" value="UniProtKB"/>
</dbReference>
<dbReference type="GO" id="GO:0005125">
    <property type="term" value="F:cytokine activity"/>
    <property type="evidence" value="ECO:0007669"/>
    <property type="project" value="UniProtKB-KW"/>
</dbReference>
<dbReference type="GO" id="GO:0008083">
    <property type="term" value="F:growth factor activity"/>
    <property type="evidence" value="ECO:0007669"/>
    <property type="project" value="UniProtKB-KW"/>
</dbReference>
<dbReference type="GO" id="GO:0008201">
    <property type="term" value="F:heparin binding"/>
    <property type="evidence" value="ECO:0000314"/>
    <property type="project" value="UniProtKB"/>
</dbReference>
<dbReference type="GO" id="GO:0042802">
    <property type="term" value="F:identical protein binding"/>
    <property type="evidence" value="ECO:0000314"/>
    <property type="project" value="UniProtKB"/>
</dbReference>
<dbReference type="GO" id="GO:0042803">
    <property type="term" value="F:protein homodimerization activity"/>
    <property type="evidence" value="ECO:0000314"/>
    <property type="project" value="UniProtKB"/>
</dbReference>
<dbReference type="GO" id="GO:0043539">
    <property type="term" value="F:protein serine/threonine kinase activator activity"/>
    <property type="evidence" value="ECO:0007669"/>
    <property type="project" value="Ensembl"/>
</dbReference>
<dbReference type="GO" id="GO:0005102">
    <property type="term" value="F:signaling receptor binding"/>
    <property type="evidence" value="ECO:0000353"/>
    <property type="project" value="MGI"/>
</dbReference>
<dbReference type="GO" id="GO:0071549">
    <property type="term" value="P:cellular response to dexamethasone stimulus"/>
    <property type="evidence" value="ECO:0000314"/>
    <property type="project" value="MGI"/>
</dbReference>
<dbReference type="GO" id="GO:0071456">
    <property type="term" value="P:cellular response to hypoxia"/>
    <property type="evidence" value="ECO:0007669"/>
    <property type="project" value="Ensembl"/>
</dbReference>
<dbReference type="GO" id="GO:0046716">
    <property type="term" value="P:muscle cell cellular homeostasis"/>
    <property type="evidence" value="ECO:0007669"/>
    <property type="project" value="Ensembl"/>
</dbReference>
<dbReference type="GO" id="GO:0014839">
    <property type="term" value="P:myoblast migration involved in skeletal muscle regeneration"/>
    <property type="evidence" value="ECO:0000315"/>
    <property type="project" value="UniProtKB"/>
</dbReference>
<dbReference type="GO" id="GO:0046627">
    <property type="term" value="P:negative regulation of insulin receptor signaling pathway"/>
    <property type="evidence" value="ECO:0000315"/>
    <property type="project" value="CACAO"/>
</dbReference>
<dbReference type="GO" id="GO:0033673">
    <property type="term" value="P:negative regulation of kinase activity"/>
    <property type="evidence" value="ECO:0000315"/>
    <property type="project" value="CACAO"/>
</dbReference>
<dbReference type="GO" id="GO:0014741">
    <property type="term" value="P:negative regulation of muscle hypertrophy"/>
    <property type="evidence" value="ECO:0007669"/>
    <property type="project" value="Ensembl"/>
</dbReference>
<dbReference type="GO" id="GO:0045662">
    <property type="term" value="P:negative regulation of myoblast differentiation"/>
    <property type="evidence" value="ECO:0007669"/>
    <property type="project" value="Ensembl"/>
</dbReference>
<dbReference type="GO" id="GO:2000818">
    <property type="term" value="P:negative regulation of myoblast proliferation"/>
    <property type="evidence" value="ECO:0000250"/>
    <property type="project" value="AgBase"/>
</dbReference>
<dbReference type="GO" id="GO:0051898">
    <property type="term" value="P:negative regulation of phosphatidylinositol 3-kinase/protein kinase B signal transduction"/>
    <property type="evidence" value="ECO:0007669"/>
    <property type="project" value="Ensembl"/>
</dbReference>
<dbReference type="GO" id="GO:1902725">
    <property type="term" value="P:negative regulation of satellite cell differentiation"/>
    <property type="evidence" value="ECO:0000250"/>
    <property type="project" value="AgBase"/>
</dbReference>
<dbReference type="GO" id="GO:1902723">
    <property type="term" value="P:negative regulation of skeletal muscle satellite cell proliferation"/>
    <property type="evidence" value="ECO:0000250"/>
    <property type="project" value="AgBase"/>
</dbReference>
<dbReference type="GO" id="GO:0048632">
    <property type="term" value="P:negative regulation of skeletal muscle tissue growth"/>
    <property type="evidence" value="ECO:0000315"/>
    <property type="project" value="UniProtKB"/>
</dbReference>
<dbReference type="GO" id="GO:0022602">
    <property type="term" value="P:ovulation cycle process"/>
    <property type="evidence" value="ECO:0007669"/>
    <property type="project" value="Ensembl"/>
</dbReference>
<dbReference type="GO" id="GO:0045893">
    <property type="term" value="P:positive regulation of DNA-templated transcription"/>
    <property type="evidence" value="ECO:0007669"/>
    <property type="project" value="Ensembl"/>
</dbReference>
<dbReference type="GO" id="GO:0010592">
    <property type="term" value="P:positive regulation of lamellipodium assembly"/>
    <property type="evidence" value="ECO:0000315"/>
    <property type="project" value="UniProtKB"/>
</dbReference>
<dbReference type="GO" id="GO:0010759">
    <property type="term" value="P:positive regulation of macrophage chemotaxis"/>
    <property type="evidence" value="ECO:0000315"/>
    <property type="project" value="UniProtKB"/>
</dbReference>
<dbReference type="GO" id="GO:0051602">
    <property type="term" value="P:response to electrical stimulus"/>
    <property type="evidence" value="ECO:0007669"/>
    <property type="project" value="Ensembl"/>
</dbReference>
<dbReference type="GO" id="GO:0043627">
    <property type="term" value="P:response to estrogen"/>
    <property type="evidence" value="ECO:0007669"/>
    <property type="project" value="Ensembl"/>
</dbReference>
<dbReference type="GO" id="GO:0045471">
    <property type="term" value="P:response to ethanol"/>
    <property type="evidence" value="ECO:0007669"/>
    <property type="project" value="Ensembl"/>
</dbReference>
<dbReference type="GO" id="GO:0009629">
    <property type="term" value="P:response to gravity"/>
    <property type="evidence" value="ECO:0007669"/>
    <property type="project" value="Ensembl"/>
</dbReference>
<dbReference type="GO" id="GO:0014850">
    <property type="term" value="P:response to muscle activity"/>
    <property type="evidence" value="ECO:0007669"/>
    <property type="project" value="Ensembl"/>
</dbReference>
<dbReference type="GO" id="GO:0033574">
    <property type="term" value="P:response to testosterone"/>
    <property type="evidence" value="ECO:0007669"/>
    <property type="project" value="Ensembl"/>
</dbReference>
<dbReference type="GO" id="GO:0014732">
    <property type="term" value="P:skeletal muscle atrophy"/>
    <property type="evidence" value="ECO:0007669"/>
    <property type="project" value="Ensembl"/>
</dbReference>
<dbReference type="GO" id="GO:0014816">
    <property type="term" value="P:skeletal muscle satellite cell differentiation"/>
    <property type="evidence" value="ECO:0000315"/>
    <property type="project" value="MGI"/>
</dbReference>
<dbReference type="GO" id="GO:0043403">
    <property type="term" value="P:skeletal muscle tissue regeneration"/>
    <property type="evidence" value="ECO:0000315"/>
    <property type="project" value="MGI"/>
</dbReference>
<dbReference type="GO" id="GO:0007179">
    <property type="term" value="P:transforming growth factor beta receptor signaling pathway"/>
    <property type="evidence" value="ECO:0000314"/>
    <property type="project" value="MGI"/>
</dbReference>
<dbReference type="CDD" id="cd19388">
    <property type="entry name" value="TGF_beta_GDF8"/>
    <property type="match status" value="1"/>
</dbReference>
<dbReference type="FunFam" id="2.60.120.970:FF:000001">
    <property type="entry name" value="Growth/differentiation factor 8"/>
    <property type="match status" value="1"/>
</dbReference>
<dbReference type="FunFam" id="2.10.90.10:FF:000006">
    <property type="entry name" value="growth/differentiation factor 8"/>
    <property type="match status" value="1"/>
</dbReference>
<dbReference type="Gene3D" id="2.60.120.970">
    <property type="match status" value="1"/>
</dbReference>
<dbReference type="Gene3D" id="2.10.90.10">
    <property type="entry name" value="Cystine-knot cytokines"/>
    <property type="match status" value="1"/>
</dbReference>
<dbReference type="IDEAL" id="IID50111"/>
<dbReference type="InterPro" id="IPR029034">
    <property type="entry name" value="Cystine-knot_cytokine"/>
</dbReference>
<dbReference type="InterPro" id="IPR001839">
    <property type="entry name" value="TGF-b_C"/>
</dbReference>
<dbReference type="InterPro" id="IPR001111">
    <property type="entry name" value="TGF-b_propeptide"/>
</dbReference>
<dbReference type="InterPro" id="IPR015615">
    <property type="entry name" value="TGF-beta-rel"/>
</dbReference>
<dbReference type="InterPro" id="IPR017948">
    <property type="entry name" value="TGFb_CS"/>
</dbReference>
<dbReference type="PANTHER" id="PTHR11848:SF150">
    <property type="entry name" value="GROWTH_DIFFERENTIATION FACTOR 8"/>
    <property type="match status" value="1"/>
</dbReference>
<dbReference type="PANTHER" id="PTHR11848">
    <property type="entry name" value="TGF-BETA FAMILY"/>
    <property type="match status" value="1"/>
</dbReference>
<dbReference type="Pfam" id="PF00019">
    <property type="entry name" value="TGF_beta"/>
    <property type="match status" value="1"/>
</dbReference>
<dbReference type="Pfam" id="PF00688">
    <property type="entry name" value="TGFb_propeptide"/>
    <property type="match status" value="1"/>
</dbReference>
<dbReference type="SMART" id="SM00204">
    <property type="entry name" value="TGFB"/>
    <property type="match status" value="1"/>
</dbReference>
<dbReference type="SUPFAM" id="SSF57501">
    <property type="entry name" value="Cystine-knot cytokines"/>
    <property type="match status" value="1"/>
</dbReference>
<dbReference type="PROSITE" id="PS00250">
    <property type="entry name" value="TGF_BETA_1"/>
    <property type="match status" value="1"/>
</dbReference>
<dbReference type="PROSITE" id="PS51362">
    <property type="entry name" value="TGF_BETA_2"/>
    <property type="match status" value="1"/>
</dbReference>
<evidence type="ECO:0000255" key="1"/>
<evidence type="ECO:0000269" key="2">
    <source>
    </source>
</evidence>
<evidence type="ECO:0000269" key="3">
    <source>
    </source>
</evidence>
<evidence type="ECO:0000269" key="4">
    <source>
    </source>
</evidence>
<evidence type="ECO:0000269" key="5">
    <source>
    </source>
</evidence>
<evidence type="ECO:0000269" key="6">
    <source>
    </source>
</evidence>
<evidence type="ECO:0000269" key="7">
    <source>
    </source>
</evidence>
<evidence type="ECO:0000305" key="8"/>
<evidence type="ECO:0007744" key="9">
    <source>
        <dbReference type="PDB" id="3HH2"/>
    </source>
</evidence>
<evidence type="ECO:0007744" key="10">
    <source>
        <dbReference type="PDB" id="3SEK"/>
    </source>
</evidence>
<evidence type="ECO:0007829" key="11">
    <source>
        <dbReference type="PDB" id="3HH2"/>
    </source>
</evidence>
<evidence type="ECO:0007829" key="12">
    <source>
        <dbReference type="PDB" id="5JI1"/>
    </source>
</evidence>
<name>GDF8_MOUSE</name>
<protein>
    <recommendedName>
        <fullName>Growth/differentiation factor 8</fullName>
        <shortName>GDF-8</shortName>
    </recommendedName>
    <alternativeName>
        <fullName>Myostatin</fullName>
    </alternativeName>
</protein>
<accession>O08689</accession>
<sequence>MMQKLQMYVYIYLFMLIAAGPVDLNEGSEREENVEKEGLCNACAWRQNTRYSRIEAIKIQILSKLRLETAPNISKDAIRQLLPRAPPLRELIDQYDVQRDDSSDGSLEDDDYHATTETIITMPTESDFLMQADGKPKCCFFKFSSKIQYNKVVKAQLWIYLRPVKTPTTVFVQILRLIKPMKDGTRYTGIRSLKLDMSPGTGIWQSIDVKTVLQNWLKQPESNLGIEIKALDENGHDLAVTFPGPGEDGLNPFLEVKVTDTPKRSRRDFGLDCDEHSTESRCCRYPLTVDFEAFGWDWIIAPKRYKANYCSGECEFVFLQKYPHTHLVHQANPRGSAGPCCTPTKMSPINMLYFNGKEQIIYGKIPAMVVDRCGCS</sequence>